<accession>A4IQY1</accession>
<organism>
    <name type="scientific">Geobacillus thermodenitrificans (strain NG80-2)</name>
    <dbReference type="NCBI Taxonomy" id="420246"/>
    <lineage>
        <taxon>Bacteria</taxon>
        <taxon>Bacillati</taxon>
        <taxon>Bacillota</taxon>
        <taxon>Bacilli</taxon>
        <taxon>Bacillales</taxon>
        <taxon>Anoxybacillaceae</taxon>
        <taxon>Geobacillus</taxon>
    </lineage>
</organism>
<keyword id="KW-0687">Ribonucleoprotein</keyword>
<keyword id="KW-0689">Ribosomal protein</keyword>
<proteinExistence type="inferred from homology"/>
<name>RL332_GEOTN</name>
<feature type="chain" id="PRO_0000356473" description="Large ribosomal subunit protein bL33B">
    <location>
        <begin position="1"/>
        <end position="49"/>
    </location>
</feature>
<protein>
    <recommendedName>
        <fullName evidence="1">Large ribosomal subunit protein bL33B</fullName>
    </recommendedName>
    <alternativeName>
        <fullName evidence="1">50S ribosomal protein L33 2</fullName>
    </alternativeName>
</protein>
<gene>
    <name evidence="1" type="primary">rpmG2</name>
    <name type="synonym">rpmGA</name>
    <name type="ordered locus">GTNG_2390</name>
</gene>
<sequence length="49" mass="5894">MRVNITLACTECGERNYISSKNKRNNPERLELKKYCPRDRKVTLHRETK</sequence>
<reference key="1">
    <citation type="journal article" date="2007" name="Proc. Natl. Acad. Sci. U.S.A.">
        <title>Genome and proteome of long-chain alkane degrading Geobacillus thermodenitrificans NG80-2 isolated from a deep-subsurface oil reservoir.</title>
        <authorList>
            <person name="Feng L."/>
            <person name="Wang W."/>
            <person name="Cheng J."/>
            <person name="Ren Y."/>
            <person name="Zhao G."/>
            <person name="Gao C."/>
            <person name="Tang Y."/>
            <person name="Liu X."/>
            <person name="Han W."/>
            <person name="Peng X."/>
            <person name="Liu R."/>
            <person name="Wang L."/>
        </authorList>
    </citation>
    <scope>NUCLEOTIDE SEQUENCE [LARGE SCALE GENOMIC DNA]</scope>
    <source>
        <strain>NG80-2</strain>
    </source>
</reference>
<evidence type="ECO:0000255" key="1">
    <source>
        <dbReference type="HAMAP-Rule" id="MF_00294"/>
    </source>
</evidence>
<comment type="similarity">
    <text evidence="1">Belongs to the bacterial ribosomal protein bL33 family.</text>
</comment>
<dbReference type="EMBL" id="CP000557">
    <property type="protein sequence ID" value="ABO67735.1"/>
    <property type="molecule type" value="Genomic_DNA"/>
</dbReference>
<dbReference type="RefSeq" id="WP_008879868.1">
    <property type="nucleotide sequence ID" value="NC_009328.1"/>
</dbReference>
<dbReference type="SMR" id="A4IQY1"/>
<dbReference type="GeneID" id="87623463"/>
<dbReference type="KEGG" id="gtn:GTNG_2390"/>
<dbReference type="eggNOG" id="COG0267">
    <property type="taxonomic scope" value="Bacteria"/>
</dbReference>
<dbReference type="HOGENOM" id="CLU_190949_0_2_9"/>
<dbReference type="Proteomes" id="UP000001578">
    <property type="component" value="Chromosome"/>
</dbReference>
<dbReference type="GO" id="GO:0005737">
    <property type="term" value="C:cytoplasm"/>
    <property type="evidence" value="ECO:0007669"/>
    <property type="project" value="UniProtKB-ARBA"/>
</dbReference>
<dbReference type="GO" id="GO:1990904">
    <property type="term" value="C:ribonucleoprotein complex"/>
    <property type="evidence" value="ECO:0007669"/>
    <property type="project" value="UniProtKB-KW"/>
</dbReference>
<dbReference type="GO" id="GO:0005840">
    <property type="term" value="C:ribosome"/>
    <property type="evidence" value="ECO:0007669"/>
    <property type="project" value="UniProtKB-KW"/>
</dbReference>
<dbReference type="GO" id="GO:0003735">
    <property type="term" value="F:structural constituent of ribosome"/>
    <property type="evidence" value="ECO:0007669"/>
    <property type="project" value="InterPro"/>
</dbReference>
<dbReference type="GO" id="GO:0006412">
    <property type="term" value="P:translation"/>
    <property type="evidence" value="ECO:0007669"/>
    <property type="project" value="UniProtKB-UniRule"/>
</dbReference>
<dbReference type="Gene3D" id="2.20.28.120">
    <property type="entry name" value="Ribosomal protein L33"/>
    <property type="match status" value="1"/>
</dbReference>
<dbReference type="HAMAP" id="MF_00294">
    <property type="entry name" value="Ribosomal_bL33"/>
    <property type="match status" value="1"/>
</dbReference>
<dbReference type="InterPro" id="IPR001705">
    <property type="entry name" value="Ribosomal_bL33"/>
</dbReference>
<dbReference type="InterPro" id="IPR018264">
    <property type="entry name" value="Ribosomal_bL33_CS"/>
</dbReference>
<dbReference type="InterPro" id="IPR038584">
    <property type="entry name" value="Ribosomal_bL33_sf"/>
</dbReference>
<dbReference type="InterPro" id="IPR011332">
    <property type="entry name" value="Ribosomal_zn-bd"/>
</dbReference>
<dbReference type="NCBIfam" id="NF001764">
    <property type="entry name" value="PRK00504.1"/>
    <property type="match status" value="1"/>
</dbReference>
<dbReference type="NCBIfam" id="NF001860">
    <property type="entry name" value="PRK00595.1"/>
    <property type="match status" value="1"/>
</dbReference>
<dbReference type="NCBIfam" id="TIGR01023">
    <property type="entry name" value="rpmG_bact"/>
    <property type="match status" value="1"/>
</dbReference>
<dbReference type="PANTHER" id="PTHR43168">
    <property type="entry name" value="50S RIBOSOMAL PROTEIN L33, CHLOROPLASTIC"/>
    <property type="match status" value="1"/>
</dbReference>
<dbReference type="PANTHER" id="PTHR43168:SF2">
    <property type="entry name" value="LARGE RIBOSOMAL SUBUNIT PROTEIN BL33C"/>
    <property type="match status" value="1"/>
</dbReference>
<dbReference type="Pfam" id="PF00471">
    <property type="entry name" value="Ribosomal_L33"/>
    <property type="match status" value="1"/>
</dbReference>
<dbReference type="SUPFAM" id="SSF57829">
    <property type="entry name" value="Zn-binding ribosomal proteins"/>
    <property type="match status" value="1"/>
</dbReference>
<dbReference type="PROSITE" id="PS00582">
    <property type="entry name" value="RIBOSOMAL_L33"/>
    <property type="match status" value="1"/>
</dbReference>